<proteinExistence type="inferred from homology"/>
<organism>
    <name type="scientific">Salmonella typhi</name>
    <dbReference type="NCBI Taxonomy" id="90370"/>
    <lineage>
        <taxon>Bacteria</taxon>
        <taxon>Pseudomonadati</taxon>
        <taxon>Pseudomonadota</taxon>
        <taxon>Gammaproteobacteria</taxon>
        <taxon>Enterobacterales</taxon>
        <taxon>Enterobacteriaceae</taxon>
        <taxon>Salmonella</taxon>
    </lineage>
</organism>
<dbReference type="EC" id="2.1.1.63" evidence="1"/>
<dbReference type="EMBL" id="AL513382">
    <property type="protein sequence ID" value="CAD01671.1"/>
    <property type="molecule type" value="Genomic_DNA"/>
</dbReference>
<dbReference type="EMBL" id="AE014613">
    <property type="protein sequence ID" value="AAO69194.1"/>
    <property type="molecule type" value="Genomic_DNA"/>
</dbReference>
<dbReference type="RefSeq" id="NP_455845.1">
    <property type="nucleotide sequence ID" value="NC_003198.1"/>
</dbReference>
<dbReference type="RefSeq" id="WP_000945036.1">
    <property type="nucleotide sequence ID" value="NZ_WSUR01000041.1"/>
</dbReference>
<dbReference type="SMR" id="P0A2U1"/>
<dbReference type="STRING" id="220341.gene:17585361"/>
<dbReference type="KEGG" id="stt:t1563"/>
<dbReference type="KEGG" id="sty:STY1405"/>
<dbReference type="PATRIC" id="fig|220341.7.peg.1415"/>
<dbReference type="eggNOG" id="COG0350">
    <property type="taxonomic scope" value="Bacteria"/>
</dbReference>
<dbReference type="HOGENOM" id="CLU_000445_52_2_6"/>
<dbReference type="OMA" id="RCGNEKA"/>
<dbReference type="OrthoDB" id="9802228at2"/>
<dbReference type="Proteomes" id="UP000000541">
    <property type="component" value="Chromosome"/>
</dbReference>
<dbReference type="Proteomes" id="UP000002670">
    <property type="component" value="Chromosome"/>
</dbReference>
<dbReference type="GO" id="GO:0005737">
    <property type="term" value="C:cytoplasm"/>
    <property type="evidence" value="ECO:0007669"/>
    <property type="project" value="UniProtKB-SubCell"/>
</dbReference>
<dbReference type="GO" id="GO:0003908">
    <property type="term" value="F:methylated-DNA-[protein]-cysteine S-methyltransferase activity"/>
    <property type="evidence" value="ECO:0007669"/>
    <property type="project" value="UniProtKB-UniRule"/>
</dbReference>
<dbReference type="GO" id="GO:0006307">
    <property type="term" value="P:DNA alkylation repair"/>
    <property type="evidence" value="ECO:0007669"/>
    <property type="project" value="UniProtKB-UniRule"/>
</dbReference>
<dbReference type="GO" id="GO:0032259">
    <property type="term" value="P:methylation"/>
    <property type="evidence" value="ECO:0007669"/>
    <property type="project" value="UniProtKB-KW"/>
</dbReference>
<dbReference type="CDD" id="cd06445">
    <property type="entry name" value="ATase"/>
    <property type="match status" value="1"/>
</dbReference>
<dbReference type="FunFam" id="1.10.10.10:FF:000337">
    <property type="entry name" value="Methylated-DNA--protein-cysteine methyltransferase"/>
    <property type="match status" value="1"/>
</dbReference>
<dbReference type="Gene3D" id="1.10.10.10">
    <property type="entry name" value="Winged helix-like DNA-binding domain superfamily/Winged helix DNA-binding domain"/>
    <property type="match status" value="1"/>
</dbReference>
<dbReference type="HAMAP" id="MF_00772">
    <property type="entry name" value="OGT"/>
    <property type="match status" value="1"/>
</dbReference>
<dbReference type="InterPro" id="IPR001497">
    <property type="entry name" value="MethylDNA_cys_MeTrfase_AS"/>
</dbReference>
<dbReference type="InterPro" id="IPR014048">
    <property type="entry name" value="MethylDNA_cys_MeTrfase_DNA-bd"/>
</dbReference>
<dbReference type="InterPro" id="IPR036217">
    <property type="entry name" value="MethylDNA_cys_MeTrfase_DNAb"/>
</dbReference>
<dbReference type="InterPro" id="IPR008332">
    <property type="entry name" value="MethylG_MeTrfase_N"/>
</dbReference>
<dbReference type="InterPro" id="IPR023546">
    <property type="entry name" value="MGMT"/>
</dbReference>
<dbReference type="InterPro" id="IPR036631">
    <property type="entry name" value="MGMT_N_sf"/>
</dbReference>
<dbReference type="InterPro" id="IPR036388">
    <property type="entry name" value="WH-like_DNA-bd_sf"/>
</dbReference>
<dbReference type="NCBIfam" id="TIGR00589">
    <property type="entry name" value="ogt"/>
    <property type="match status" value="1"/>
</dbReference>
<dbReference type="NCBIfam" id="NF007626">
    <property type="entry name" value="PRK10286.1"/>
    <property type="match status" value="1"/>
</dbReference>
<dbReference type="PANTHER" id="PTHR10815">
    <property type="entry name" value="METHYLATED-DNA--PROTEIN-CYSTEINE METHYLTRANSFERASE"/>
    <property type="match status" value="1"/>
</dbReference>
<dbReference type="PANTHER" id="PTHR10815:SF5">
    <property type="entry name" value="METHYLATED-DNA--PROTEIN-CYSTEINE METHYLTRANSFERASE"/>
    <property type="match status" value="1"/>
</dbReference>
<dbReference type="Pfam" id="PF01035">
    <property type="entry name" value="DNA_binding_1"/>
    <property type="match status" value="1"/>
</dbReference>
<dbReference type="Pfam" id="PF02870">
    <property type="entry name" value="Methyltransf_1N"/>
    <property type="match status" value="1"/>
</dbReference>
<dbReference type="SUPFAM" id="SSF53155">
    <property type="entry name" value="Methylated DNA-protein cysteine methyltransferase domain"/>
    <property type="match status" value="1"/>
</dbReference>
<dbReference type="SUPFAM" id="SSF46767">
    <property type="entry name" value="Methylated DNA-protein cysteine methyltransferase, C-terminal domain"/>
    <property type="match status" value="1"/>
</dbReference>
<dbReference type="PROSITE" id="PS00374">
    <property type="entry name" value="MGMT"/>
    <property type="match status" value="1"/>
</dbReference>
<reference key="1">
    <citation type="journal article" date="2001" name="Nature">
        <title>Complete genome sequence of a multiple drug resistant Salmonella enterica serovar Typhi CT18.</title>
        <authorList>
            <person name="Parkhill J."/>
            <person name="Dougan G."/>
            <person name="James K.D."/>
            <person name="Thomson N.R."/>
            <person name="Pickard D."/>
            <person name="Wain J."/>
            <person name="Churcher C.M."/>
            <person name="Mungall K.L."/>
            <person name="Bentley S.D."/>
            <person name="Holden M.T.G."/>
            <person name="Sebaihia M."/>
            <person name="Baker S."/>
            <person name="Basham D."/>
            <person name="Brooks K."/>
            <person name="Chillingworth T."/>
            <person name="Connerton P."/>
            <person name="Cronin A."/>
            <person name="Davis P."/>
            <person name="Davies R.M."/>
            <person name="Dowd L."/>
            <person name="White N."/>
            <person name="Farrar J."/>
            <person name="Feltwell T."/>
            <person name="Hamlin N."/>
            <person name="Haque A."/>
            <person name="Hien T.T."/>
            <person name="Holroyd S."/>
            <person name="Jagels K."/>
            <person name="Krogh A."/>
            <person name="Larsen T.S."/>
            <person name="Leather S."/>
            <person name="Moule S."/>
            <person name="O'Gaora P."/>
            <person name="Parry C."/>
            <person name="Quail M.A."/>
            <person name="Rutherford K.M."/>
            <person name="Simmonds M."/>
            <person name="Skelton J."/>
            <person name="Stevens K."/>
            <person name="Whitehead S."/>
            <person name="Barrell B.G."/>
        </authorList>
    </citation>
    <scope>NUCLEOTIDE SEQUENCE [LARGE SCALE GENOMIC DNA]</scope>
    <source>
        <strain>CT18</strain>
    </source>
</reference>
<reference key="2">
    <citation type="journal article" date="2003" name="J. Bacteriol.">
        <title>Comparative genomics of Salmonella enterica serovar Typhi strains Ty2 and CT18.</title>
        <authorList>
            <person name="Deng W."/>
            <person name="Liou S.-R."/>
            <person name="Plunkett G. III"/>
            <person name="Mayhew G.F."/>
            <person name="Rose D.J."/>
            <person name="Burland V."/>
            <person name="Kodoyianni V."/>
            <person name="Schwartz D.C."/>
            <person name="Blattner F.R."/>
        </authorList>
    </citation>
    <scope>NUCLEOTIDE SEQUENCE [LARGE SCALE GENOMIC DNA]</scope>
    <source>
        <strain>ATCC 700931 / Ty2</strain>
    </source>
</reference>
<feature type="chain" id="PRO_0000139371" description="Methylated-DNA--protein-cysteine methyltransferase">
    <location>
        <begin position="1"/>
        <end position="171"/>
    </location>
</feature>
<feature type="active site" description="Nucleophile; methyl group acceptor" evidence="1">
    <location>
        <position position="139"/>
    </location>
</feature>
<name>OGT_SALTI</name>
<comment type="function">
    <text evidence="1">Involved in the cellular defense against the biological effects of O6-methylguanine (O6-MeG) and O4-methylthymine (O4-MeT) in DNA. Repairs the methylated nucleobase in DNA by stoichiometrically transferring the methyl group to a cysteine residue in the enzyme. This is a suicide reaction: the enzyme is irreversibly inactivated.</text>
</comment>
<comment type="catalytic activity">
    <reaction evidence="1">
        <text>a 6-O-methyl-2'-deoxyguanosine in DNA + L-cysteinyl-[protein] = S-methyl-L-cysteinyl-[protein] + a 2'-deoxyguanosine in DNA</text>
        <dbReference type="Rhea" id="RHEA:24000"/>
        <dbReference type="Rhea" id="RHEA-COMP:10131"/>
        <dbReference type="Rhea" id="RHEA-COMP:10132"/>
        <dbReference type="Rhea" id="RHEA-COMP:11367"/>
        <dbReference type="Rhea" id="RHEA-COMP:11368"/>
        <dbReference type="ChEBI" id="CHEBI:29950"/>
        <dbReference type="ChEBI" id="CHEBI:82612"/>
        <dbReference type="ChEBI" id="CHEBI:85445"/>
        <dbReference type="ChEBI" id="CHEBI:85448"/>
        <dbReference type="EC" id="2.1.1.63"/>
    </reaction>
</comment>
<comment type="catalytic activity">
    <reaction evidence="1">
        <text>a 4-O-methyl-thymidine in DNA + L-cysteinyl-[protein] = a thymidine in DNA + S-methyl-L-cysteinyl-[protein]</text>
        <dbReference type="Rhea" id="RHEA:53428"/>
        <dbReference type="Rhea" id="RHEA-COMP:10131"/>
        <dbReference type="Rhea" id="RHEA-COMP:10132"/>
        <dbReference type="Rhea" id="RHEA-COMP:13555"/>
        <dbReference type="Rhea" id="RHEA-COMP:13556"/>
        <dbReference type="ChEBI" id="CHEBI:29950"/>
        <dbReference type="ChEBI" id="CHEBI:82612"/>
        <dbReference type="ChEBI" id="CHEBI:137386"/>
        <dbReference type="ChEBI" id="CHEBI:137387"/>
        <dbReference type="EC" id="2.1.1.63"/>
    </reaction>
</comment>
<comment type="subcellular location">
    <subcellularLocation>
        <location evidence="1">Cytoplasm</location>
    </subcellularLocation>
</comment>
<comment type="miscellaneous">
    <text evidence="1">This enzyme catalyzes only one turnover and therefore is not strictly catalytic. According to one definition, an enzyme is a biocatalyst that acts repeatedly and over many reaction cycles.</text>
</comment>
<comment type="similarity">
    <text evidence="1">Belongs to the MGMT family.</text>
</comment>
<sequence length="171" mass="19008">MLRLLEEKIATPLGPLWVVCDEQFRLRAIEWEQYRDRMEQLLNIHYRHEGYERVSATNPGGLSDKLADYFAGNLAVIDTLETATGGTPFQREVWQALRAIPCGQVMHYGQLAAQLGRPGAARAVGAANGANPISIVVPCHRVIGRNGTLTGYAGGVQRKEWLLRHEGYLLL</sequence>
<protein>
    <recommendedName>
        <fullName evidence="1">Methylated-DNA--protein-cysteine methyltransferase</fullName>
        <ecNumber evidence="1">2.1.1.63</ecNumber>
    </recommendedName>
    <alternativeName>
        <fullName evidence="1">6-O-methylguanine-DNA methyltransferase</fullName>
        <shortName evidence="1">MGMT</shortName>
    </alternativeName>
    <alternativeName>
        <fullName evidence="1">O-6-methylguanine-DNA-alkyltransferase</fullName>
    </alternativeName>
</protein>
<accession>P0A2U1</accession>
<accession>P37429</accession>
<accession>Q56015</accession>
<evidence type="ECO:0000255" key="1">
    <source>
        <dbReference type="HAMAP-Rule" id="MF_00772"/>
    </source>
</evidence>
<gene>
    <name evidence="1" type="primary">ogt</name>
    <name type="ordered locus">STY1405</name>
    <name type="ordered locus">t1563</name>
</gene>
<keyword id="KW-0963">Cytoplasm</keyword>
<keyword id="KW-0227">DNA damage</keyword>
<keyword id="KW-0234">DNA repair</keyword>
<keyword id="KW-0489">Methyltransferase</keyword>
<keyword id="KW-0808">Transferase</keyword>